<comment type="function">
    <text evidence="1">This protein binds to the 23S rRNA, and is important in its secondary structure. It is located near the subunit interface in the base of the L7/L12 stalk, and near the tRNA binding site of the peptidyltransferase center.</text>
</comment>
<comment type="subunit">
    <text evidence="1">Part of the 50S ribosomal subunit.</text>
</comment>
<comment type="similarity">
    <text evidence="1">Belongs to the universal ribosomal protein uL6 family.</text>
</comment>
<protein>
    <recommendedName>
        <fullName evidence="1">Large ribosomal subunit protein uL6</fullName>
    </recommendedName>
    <alternativeName>
        <fullName evidence="2">50S ribosomal protein L6</fullName>
    </alternativeName>
</protein>
<proteinExistence type="inferred from homology"/>
<organism>
    <name type="scientific">Salmonella paratyphi C (strain RKS4594)</name>
    <dbReference type="NCBI Taxonomy" id="476213"/>
    <lineage>
        <taxon>Bacteria</taxon>
        <taxon>Pseudomonadati</taxon>
        <taxon>Pseudomonadota</taxon>
        <taxon>Gammaproteobacteria</taxon>
        <taxon>Enterobacterales</taxon>
        <taxon>Enterobacteriaceae</taxon>
        <taxon>Salmonella</taxon>
    </lineage>
</organism>
<keyword id="KW-0687">Ribonucleoprotein</keyword>
<keyword id="KW-0689">Ribosomal protein</keyword>
<keyword id="KW-0694">RNA-binding</keyword>
<keyword id="KW-0699">rRNA-binding</keyword>
<name>RL6_SALPC</name>
<feature type="chain" id="PRO_1000166827" description="Large ribosomal subunit protein uL6">
    <location>
        <begin position="1"/>
        <end position="177"/>
    </location>
</feature>
<gene>
    <name evidence="1" type="primary">rplF</name>
    <name type="ordered locus">SPC_3494</name>
</gene>
<evidence type="ECO:0000255" key="1">
    <source>
        <dbReference type="HAMAP-Rule" id="MF_01365"/>
    </source>
</evidence>
<evidence type="ECO:0000305" key="2"/>
<accession>C0PZW8</accession>
<dbReference type="EMBL" id="CP000857">
    <property type="protein sequence ID" value="ACN47578.1"/>
    <property type="molecule type" value="Genomic_DNA"/>
</dbReference>
<dbReference type="RefSeq" id="WP_000091939.1">
    <property type="nucleotide sequence ID" value="NC_012125.1"/>
</dbReference>
<dbReference type="SMR" id="C0PZW8"/>
<dbReference type="KEGG" id="sei:SPC_3494"/>
<dbReference type="HOGENOM" id="CLU_065464_1_2_6"/>
<dbReference type="Proteomes" id="UP000001599">
    <property type="component" value="Chromosome"/>
</dbReference>
<dbReference type="GO" id="GO:0022625">
    <property type="term" value="C:cytosolic large ribosomal subunit"/>
    <property type="evidence" value="ECO:0007669"/>
    <property type="project" value="TreeGrafter"/>
</dbReference>
<dbReference type="GO" id="GO:0019843">
    <property type="term" value="F:rRNA binding"/>
    <property type="evidence" value="ECO:0007669"/>
    <property type="project" value="UniProtKB-UniRule"/>
</dbReference>
<dbReference type="GO" id="GO:0003735">
    <property type="term" value="F:structural constituent of ribosome"/>
    <property type="evidence" value="ECO:0007669"/>
    <property type="project" value="InterPro"/>
</dbReference>
<dbReference type="GO" id="GO:0002181">
    <property type="term" value="P:cytoplasmic translation"/>
    <property type="evidence" value="ECO:0007669"/>
    <property type="project" value="TreeGrafter"/>
</dbReference>
<dbReference type="FunFam" id="3.90.930.12:FF:000001">
    <property type="entry name" value="50S ribosomal protein L6"/>
    <property type="match status" value="1"/>
</dbReference>
<dbReference type="FunFam" id="3.90.930.12:FF:000002">
    <property type="entry name" value="50S ribosomal protein L6"/>
    <property type="match status" value="1"/>
</dbReference>
<dbReference type="Gene3D" id="3.90.930.12">
    <property type="entry name" value="Ribosomal protein L6, alpha-beta domain"/>
    <property type="match status" value="2"/>
</dbReference>
<dbReference type="HAMAP" id="MF_01365_B">
    <property type="entry name" value="Ribosomal_uL6_B"/>
    <property type="match status" value="1"/>
</dbReference>
<dbReference type="InterPro" id="IPR000702">
    <property type="entry name" value="Ribosomal_uL6-like"/>
</dbReference>
<dbReference type="InterPro" id="IPR036789">
    <property type="entry name" value="Ribosomal_uL6-like_a/b-dom_sf"/>
</dbReference>
<dbReference type="InterPro" id="IPR020040">
    <property type="entry name" value="Ribosomal_uL6_a/b-dom"/>
</dbReference>
<dbReference type="InterPro" id="IPR019906">
    <property type="entry name" value="Ribosomal_uL6_bac-type"/>
</dbReference>
<dbReference type="InterPro" id="IPR002358">
    <property type="entry name" value="Ribosomal_uL6_CS"/>
</dbReference>
<dbReference type="NCBIfam" id="TIGR03654">
    <property type="entry name" value="L6_bact"/>
    <property type="match status" value="1"/>
</dbReference>
<dbReference type="PANTHER" id="PTHR11655">
    <property type="entry name" value="60S/50S RIBOSOMAL PROTEIN L6/L9"/>
    <property type="match status" value="1"/>
</dbReference>
<dbReference type="PANTHER" id="PTHR11655:SF14">
    <property type="entry name" value="LARGE RIBOSOMAL SUBUNIT PROTEIN UL6M"/>
    <property type="match status" value="1"/>
</dbReference>
<dbReference type="Pfam" id="PF00347">
    <property type="entry name" value="Ribosomal_L6"/>
    <property type="match status" value="2"/>
</dbReference>
<dbReference type="PIRSF" id="PIRSF002162">
    <property type="entry name" value="Ribosomal_L6"/>
    <property type="match status" value="1"/>
</dbReference>
<dbReference type="PRINTS" id="PR00059">
    <property type="entry name" value="RIBOSOMALL6"/>
</dbReference>
<dbReference type="SUPFAM" id="SSF56053">
    <property type="entry name" value="Ribosomal protein L6"/>
    <property type="match status" value="2"/>
</dbReference>
<dbReference type="PROSITE" id="PS00525">
    <property type="entry name" value="RIBOSOMAL_L6_1"/>
    <property type="match status" value="1"/>
</dbReference>
<sequence>MSRVAKAPVVVPAGVDVKINGQVITIKGKNGELTRTLNDAVEVKHADNALTFGPRDGYADGWAQAGTARALLNSMVIGVTEGFTKKLQLVGVGYRAAVKGNVVNLSLGFSHPVDHQLPAGITAECPTQTEIVLKGADKQVIGQVAADLRAYRRPEPYKGKGVRYADEVVRTKEAKKK</sequence>
<reference key="1">
    <citation type="journal article" date="2009" name="PLoS ONE">
        <title>Salmonella paratyphi C: genetic divergence from Salmonella choleraesuis and pathogenic convergence with Salmonella typhi.</title>
        <authorList>
            <person name="Liu W.-Q."/>
            <person name="Feng Y."/>
            <person name="Wang Y."/>
            <person name="Zou Q.-H."/>
            <person name="Chen F."/>
            <person name="Guo J.-T."/>
            <person name="Peng Y.-H."/>
            <person name="Jin Y."/>
            <person name="Li Y.-G."/>
            <person name="Hu S.-N."/>
            <person name="Johnston R.N."/>
            <person name="Liu G.-R."/>
            <person name="Liu S.-L."/>
        </authorList>
    </citation>
    <scope>NUCLEOTIDE SEQUENCE [LARGE SCALE GENOMIC DNA]</scope>
    <source>
        <strain>RKS4594</strain>
    </source>
</reference>